<geneLocation type="chloroplast"/>
<feature type="chain" id="PRO_0000125299" description="Large ribosomal subunit protein uL22c">
    <location>
        <begin position="1"/>
        <end position="140"/>
    </location>
</feature>
<accession>Q7YJT9</accession>
<proteinExistence type="inferred from homology"/>
<protein>
    <recommendedName>
        <fullName evidence="2">Large ribosomal subunit protein uL22c</fullName>
    </recommendedName>
    <alternativeName>
        <fullName>50S ribosomal protein L22, chloroplastic</fullName>
    </alternativeName>
</protein>
<name>RK22_CALFG</name>
<keyword id="KW-0150">Chloroplast</keyword>
<keyword id="KW-0934">Plastid</keyword>
<keyword id="KW-0687">Ribonucleoprotein</keyword>
<keyword id="KW-0689">Ribosomal protein</keyword>
<keyword id="KW-0694">RNA-binding</keyword>
<keyword id="KW-0699">rRNA-binding</keyword>
<dbReference type="EMBL" id="AJ428413">
    <property type="protein sequence ID" value="CAD28760.1"/>
    <property type="molecule type" value="Genomic_DNA"/>
</dbReference>
<dbReference type="RefSeq" id="NP_862793.1">
    <property type="nucleotide sequence ID" value="NC_004993.1"/>
</dbReference>
<dbReference type="SMR" id="Q7YJT9"/>
<dbReference type="GeneID" id="2598025"/>
<dbReference type="GO" id="GO:0009507">
    <property type="term" value="C:chloroplast"/>
    <property type="evidence" value="ECO:0007669"/>
    <property type="project" value="UniProtKB-SubCell"/>
</dbReference>
<dbReference type="GO" id="GO:0015934">
    <property type="term" value="C:large ribosomal subunit"/>
    <property type="evidence" value="ECO:0007669"/>
    <property type="project" value="InterPro"/>
</dbReference>
<dbReference type="GO" id="GO:0019843">
    <property type="term" value="F:rRNA binding"/>
    <property type="evidence" value="ECO:0007669"/>
    <property type="project" value="UniProtKB-UniRule"/>
</dbReference>
<dbReference type="GO" id="GO:0003735">
    <property type="term" value="F:structural constituent of ribosome"/>
    <property type="evidence" value="ECO:0007669"/>
    <property type="project" value="InterPro"/>
</dbReference>
<dbReference type="GO" id="GO:0006412">
    <property type="term" value="P:translation"/>
    <property type="evidence" value="ECO:0007669"/>
    <property type="project" value="UniProtKB-UniRule"/>
</dbReference>
<dbReference type="CDD" id="cd00336">
    <property type="entry name" value="Ribosomal_L22"/>
    <property type="match status" value="1"/>
</dbReference>
<dbReference type="FunFam" id="3.90.470.10:FF:000006">
    <property type="entry name" value="50S ribosomal protein L22, chloroplastic"/>
    <property type="match status" value="1"/>
</dbReference>
<dbReference type="Gene3D" id="3.90.470.10">
    <property type="entry name" value="Ribosomal protein L22/L17"/>
    <property type="match status" value="1"/>
</dbReference>
<dbReference type="HAMAP" id="MF_01331_B">
    <property type="entry name" value="Ribosomal_uL22_B"/>
    <property type="match status" value="1"/>
</dbReference>
<dbReference type="InterPro" id="IPR001063">
    <property type="entry name" value="Ribosomal_uL22"/>
</dbReference>
<dbReference type="InterPro" id="IPR005727">
    <property type="entry name" value="Ribosomal_uL22_bac/chlpt-type"/>
</dbReference>
<dbReference type="InterPro" id="IPR047867">
    <property type="entry name" value="Ribosomal_uL22_bac/org-type"/>
</dbReference>
<dbReference type="InterPro" id="IPR018260">
    <property type="entry name" value="Ribosomal_uL22_CS"/>
</dbReference>
<dbReference type="InterPro" id="IPR036394">
    <property type="entry name" value="Ribosomal_uL22_sf"/>
</dbReference>
<dbReference type="NCBIfam" id="TIGR01044">
    <property type="entry name" value="rplV_bact"/>
    <property type="match status" value="1"/>
</dbReference>
<dbReference type="PANTHER" id="PTHR13501">
    <property type="entry name" value="CHLOROPLAST 50S RIBOSOMAL PROTEIN L22-RELATED"/>
    <property type="match status" value="1"/>
</dbReference>
<dbReference type="PANTHER" id="PTHR13501:SF10">
    <property type="entry name" value="LARGE RIBOSOMAL SUBUNIT PROTEIN UL22M"/>
    <property type="match status" value="1"/>
</dbReference>
<dbReference type="Pfam" id="PF00237">
    <property type="entry name" value="Ribosomal_L22"/>
    <property type="match status" value="1"/>
</dbReference>
<dbReference type="SUPFAM" id="SSF54843">
    <property type="entry name" value="Ribosomal protein L22"/>
    <property type="match status" value="1"/>
</dbReference>
<dbReference type="PROSITE" id="PS00464">
    <property type="entry name" value="RIBOSOMAL_L22"/>
    <property type="match status" value="1"/>
</dbReference>
<gene>
    <name type="primary">rpl22</name>
</gene>
<reference key="1">
    <citation type="journal article" date="2003" name="Plant Syst. Evol.">
        <title>The chloroplast genome of the 'basal' angiosperm Calycanthus fertilis -- structural and phylogenetic analyses.</title>
        <authorList>
            <person name="Goremykin V."/>
            <person name="Hirsch-Ernst K.I."/>
            <person name="Woelfl S."/>
            <person name="Hellwig F.H."/>
        </authorList>
    </citation>
    <scope>NUCLEOTIDE SEQUENCE [LARGE SCALE GENOMIC DNA]</scope>
</reference>
<organism>
    <name type="scientific">Calycanthus floridus var. glaucus</name>
    <name type="common">Eastern sweetshrub</name>
    <name type="synonym">Calycanthus fertilis var. ferax</name>
    <dbReference type="NCBI Taxonomy" id="212734"/>
    <lineage>
        <taxon>Eukaryota</taxon>
        <taxon>Viridiplantae</taxon>
        <taxon>Streptophyta</taxon>
        <taxon>Embryophyta</taxon>
        <taxon>Tracheophyta</taxon>
        <taxon>Spermatophyta</taxon>
        <taxon>Magnoliopsida</taxon>
        <taxon>Magnoliidae</taxon>
        <taxon>Laurales</taxon>
        <taxon>Calycanthaceae</taxon>
        <taxon>Calycanthus</taxon>
    </lineage>
</organism>
<evidence type="ECO:0000250" key="1"/>
<evidence type="ECO:0000305" key="2"/>
<sequence length="140" mass="15836">MSSKKKQKMKRSSSTQVQALAQHISMSAHKARRVVDQIRGRSYAETLMLLELMPYRASYPIFKLVYSAAANASHNKSFNEADSFISKAEVNGGTIVKKFKPRAKGRSYPIKRPTCHITIVLKDRSKKKTDQDMFLGTKNV</sequence>
<comment type="function">
    <text evidence="1">This protein binds specifically to 23S rRNA.</text>
</comment>
<comment type="function">
    <text evidence="1">The globular domain of the protein is located near the polypeptide exit tunnel on the outside of the subunit, while an extended beta-hairpin is found that lines the wall of the exit tunnel in the center of the 70S ribosome.</text>
</comment>
<comment type="subunit">
    <text evidence="1">Part of the 50S ribosomal subunit.</text>
</comment>
<comment type="subcellular location">
    <subcellularLocation>
        <location>Plastid</location>
        <location>Chloroplast</location>
    </subcellularLocation>
</comment>
<comment type="similarity">
    <text evidence="2">Belongs to the universal ribosomal protein uL22 family.</text>
</comment>